<keyword id="KW-0472">Membrane</keyword>
<keyword id="KW-1185">Reference proteome</keyword>
<keyword id="KW-0812">Transmembrane</keyword>
<keyword id="KW-1133">Transmembrane helix</keyword>
<comment type="subcellular location">
    <subcellularLocation>
        <location evidence="2">Membrane</location>
        <topology evidence="2">Single-pass membrane protein</topology>
    </subcellularLocation>
</comment>
<evidence type="ECO:0000255" key="1"/>
<evidence type="ECO:0000305" key="2"/>
<organism>
    <name type="scientific">Mycobacterium bovis (strain ATCC BAA-935 / AF2122/97)</name>
    <dbReference type="NCBI Taxonomy" id="233413"/>
    <lineage>
        <taxon>Bacteria</taxon>
        <taxon>Bacillati</taxon>
        <taxon>Actinomycetota</taxon>
        <taxon>Actinomycetes</taxon>
        <taxon>Mycobacteriales</taxon>
        <taxon>Mycobacteriaceae</taxon>
        <taxon>Mycobacterium</taxon>
        <taxon>Mycobacterium tuberculosis complex</taxon>
    </lineage>
</organism>
<sequence length="206" mass="21943">MGNLLVVIAVALFIAAIVVLVVAIRRPKTPATPGGRRDPLAFDAMPQFGPRQLGPGAIVSHGGIDYVVRGSVTFREGPFVWWEHLLEGGDTPTWLSVQEDDGRLELAMWVKRTDLGLQPGGQHVIDGVTFQETERGHAGYTTEGTTGLPAGGEMDYVDCASAGQGADESMLLSFERWAPDMGWEIATGKSVLAGELTVYPAPPVSA</sequence>
<gene>
    <name type="ordered locus">BQ2027_MB2628</name>
</gene>
<feature type="chain" id="PRO_0000104066" description="Uncharacterized protein Mb2628">
    <location>
        <begin position="1"/>
        <end position="206"/>
    </location>
</feature>
<feature type="transmembrane region" description="Helical" evidence="1">
    <location>
        <begin position="4"/>
        <end position="24"/>
    </location>
</feature>
<protein>
    <recommendedName>
        <fullName>Uncharacterized protein Mb2628</fullName>
    </recommendedName>
</protein>
<accession>P65030</accession>
<accession>A0A1R3Y2H7</accession>
<accession>Q50624</accession>
<accession>X2BKW7</accession>
<reference key="1">
    <citation type="journal article" date="2003" name="Proc. Natl. Acad. Sci. U.S.A.">
        <title>The complete genome sequence of Mycobacterium bovis.</title>
        <authorList>
            <person name="Garnier T."/>
            <person name="Eiglmeier K."/>
            <person name="Camus J.-C."/>
            <person name="Medina N."/>
            <person name="Mansoor H."/>
            <person name="Pryor M."/>
            <person name="Duthoy S."/>
            <person name="Grondin S."/>
            <person name="Lacroix C."/>
            <person name="Monsempe C."/>
            <person name="Simon S."/>
            <person name="Harris B."/>
            <person name="Atkin R."/>
            <person name="Doggett J."/>
            <person name="Mayes R."/>
            <person name="Keating L."/>
            <person name="Wheeler P.R."/>
            <person name="Parkhill J."/>
            <person name="Barrell B.G."/>
            <person name="Cole S.T."/>
            <person name="Gordon S.V."/>
            <person name="Hewinson R.G."/>
        </authorList>
    </citation>
    <scope>NUCLEOTIDE SEQUENCE [LARGE SCALE GENOMIC DNA]</scope>
    <source>
        <strain>ATCC BAA-935 / AF2122/97</strain>
    </source>
</reference>
<reference key="2">
    <citation type="journal article" date="2017" name="Genome Announc.">
        <title>Updated reference genome sequence and annotation of Mycobacterium bovis AF2122/97.</title>
        <authorList>
            <person name="Malone K.M."/>
            <person name="Farrell D."/>
            <person name="Stuber T.P."/>
            <person name="Schubert O.T."/>
            <person name="Aebersold R."/>
            <person name="Robbe-Austerman S."/>
            <person name="Gordon S.V."/>
        </authorList>
    </citation>
    <scope>NUCLEOTIDE SEQUENCE [LARGE SCALE GENOMIC DNA]</scope>
    <scope>GENOME REANNOTATION</scope>
    <source>
        <strain>ATCC BAA-935 / AF2122/97</strain>
    </source>
</reference>
<name>Y2628_MYCBO</name>
<proteinExistence type="predicted"/>
<dbReference type="EMBL" id="LT708304">
    <property type="protein sequence ID" value="SIU01246.1"/>
    <property type="molecule type" value="Genomic_DNA"/>
</dbReference>
<dbReference type="RefSeq" id="NP_856274.1">
    <property type="nucleotide sequence ID" value="NC_002945.3"/>
</dbReference>
<dbReference type="RefSeq" id="WP_003413441.1">
    <property type="nucleotide sequence ID" value="NC_002945.4"/>
</dbReference>
<dbReference type="KEGG" id="mbo:BQ2027_MB2628"/>
<dbReference type="PATRIC" id="fig|233413.5.peg.2889"/>
<dbReference type="Proteomes" id="UP000001419">
    <property type="component" value="Chromosome"/>
</dbReference>
<dbReference type="GO" id="GO:0016020">
    <property type="term" value="C:membrane"/>
    <property type="evidence" value="ECO:0007669"/>
    <property type="project" value="UniProtKB-SubCell"/>
</dbReference>
<dbReference type="InterPro" id="IPR025235">
    <property type="entry name" value="DUF4178"/>
</dbReference>
<dbReference type="Pfam" id="PF13785">
    <property type="entry name" value="DUF4178"/>
    <property type="match status" value="1"/>
</dbReference>